<reference key="1">
    <citation type="journal article" date="2010" name="J. Bacteriol.">
        <title>Genome sequence of the deep-rooted Yersinia pestis strain Angola reveals new insights into the evolution and pangenome of the plague bacterium.</title>
        <authorList>
            <person name="Eppinger M."/>
            <person name="Worsham P.L."/>
            <person name="Nikolich M.P."/>
            <person name="Riley D.R."/>
            <person name="Sebastian Y."/>
            <person name="Mou S."/>
            <person name="Achtman M."/>
            <person name="Lindler L.E."/>
            <person name="Ravel J."/>
        </authorList>
    </citation>
    <scope>NUCLEOTIDE SEQUENCE [LARGE SCALE GENOMIC DNA]</scope>
    <source>
        <strain>Angola</strain>
    </source>
</reference>
<proteinExistence type="inferred from homology"/>
<gene>
    <name type="ordered locus">YpAngola_A4013</name>
</gene>
<organism>
    <name type="scientific">Yersinia pestis bv. Antiqua (strain Angola)</name>
    <dbReference type="NCBI Taxonomy" id="349746"/>
    <lineage>
        <taxon>Bacteria</taxon>
        <taxon>Pseudomonadati</taxon>
        <taxon>Pseudomonadota</taxon>
        <taxon>Gammaproteobacteria</taxon>
        <taxon>Enterobacterales</taxon>
        <taxon>Yersiniaceae</taxon>
        <taxon>Yersinia</taxon>
    </lineage>
</organism>
<comment type="similarity">
    <text evidence="1">Belongs to the UPF0213 family.</text>
</comment>
<name>Y4013_YERPG</name>
<feature type="chain" id="PRO_1000135753" description="UPF0213 protein YpAngola_A4013">
    <location>
        <begin position="1"/>
        <end position="95"/>
    </location>
</feature>
<feature type="domain" description="GIY-YIG" evidence="1">
    <location>
        <begin position="4"/>
        <end position="79"/>
    </location>
</feature>
<sequence>MSDSLWHLYLLRTASGMLYTGITTDVARRLAQHQAGKGAKALRGKGELTLVFHCEAGDRSTALKLEYRVKQLSKQQKEKLVIDQPRLLTTLFLDS</sequence>
<dbReference type="EMBL" id="CP000901">
    <property type="protein sequence ID" value="ABX87146.1"/>
    <property type="molecule type" value="Genomic_DNA"/>
</dbReference>
<dbReference type="RefSeq" id="WP_002209274.1">
    <property type="nucleotide sequence ID" value="NZ_CP009935.1"/>
</dbReference>
<dbReference type="SMR" id="A9R5C3"/>
<dbReference type="KEGG" id="ypg:YpAngola_A4013"/>
<dbReference type="PATRIC" id="fig|349746.12.peg.738"/>
<dbReference type="CDD" id="cd10456">
    <property type="entry name" value="GIY-YIG_UPF0213"/>
    <property type="match status" value="1"/>
</dbReference>
<dbReference type="Gene3D" id="3.40.1440.10">
    <property type="entry name" value="GIY-YIG endonuclease"/>
    <property type="match status" value="1"/>
</dbReference>
<dbReference type="HAMAP" id="MF_01029">
    <property type="entry name" value="UPF0213"/>
    <property type="match status" value="1"/>
</dbReference>
<dbReference type="InterPro" id="IPR000305">
    <property type="entry name" value="GIY-YIG_endonuc"/>
</dbReference>
<dbReference type="InterPro" id="IPR035901">
    <property type="entry name" value="GIY-YIG_endonuc_sf"/>
</dbReference>
<dbReference type="InterPro" id="IPR050190">
    <property type="entry name" value="UPF0213_domain"/>
</dbReference>
<dbReference type="InterPro" id="IPR022992">
    <property type="entry name" value="UPF0213_GIY-YIG_endonuc"/>
</dbReference>
<dbReference type="PANTHER" id="PTHR34477">
    <property type="entry name" value="UPF0213 PROTEIN YHBQ"/>
    <property type="match status" value="1"/>
</dbReference>
<dbReference type="PANTHER" id="PTHR34477:SF1">
    <property type="entry name" value="UPF0213 PROTEIN YHBQ"/>
    <property type="match status" value="1"/>
</dbReference>
<dbReference type="Pfam" id="PF01541">
    <property type="entry name" value="GIY-YIG"/>
    <property type="match status" value="1"/>
</dbReference>
<dbReference type="SUPFAM" id="SSF82771">
    <property type="entry name" value="GIY-YIG endonuclease"/>
    <property type="match status" value="1"/>
</dbReference>
<dbReference type="PROSITE" id="PS50164">
    <property type="entry name" value="GIY_YIG"/>
    <property type="match status" value="1"/>
</dbReference>
<evidence type="ECO:0000255" key="1">
    <source>
        <dbReference type="HAMAP-Rule" id="MF_01029"/>
    </source>
</evidence>
<protein>
    <recommendedName>
        <fullName evidence="1">UPF0213 protein YpAngola_A4013</fullName>
    </recommendedName>
</protein>
<accession>A9R5C3</accession>